<evidence type="ECO:0000255" key="1">
    <source>
        <dbReference type="HAMAP-Rule" id="MF_00046"/>
    </source>
</evidence>
<feature type="chain" id="PRO_1000004307" description="UDP-N-acetylmuramate--L-alanine ligase">
    <location>
        <begin position="1"/>
        <end position="458"/>
    </location>
</feature>
<feature type="binding site" evidence="1">
    <location>
        <begin position="115"/>
        <end position="121"/>
    </location>
    <ligand>
        <name>ATP</name>
        <dbReference type="ChEBI" id="CHEBI:30616"/>
    </ligand>
</feature>
<accession>A7HH68</accession>
<sequence length="458" mass="49500">MSLFRSRPAKIHFVGIGGIGMSGIAEVLLNLGYAVSGSDLKESEITRRLASLGGRVQRGHAAQHVEQVDVVVTSSAVRKDNPEVVEARRRKIPIIPRAEMLAELMRLKYGVAIAGSHGKTTTTSLAAHLLAHAGLDPTAVVGGKVNTFGSNAKLGRGDYMVVEADESDGSFLHIPPTIAIVTNIDPEHLDHWKTEEALRKGFLDFVNRVPFYGRAILCIDHPTVQSLLPEVESRYVTYGESHQADYRADGIEVSGHAVRFDAFRRDEPLGRFEVRLVGRHNALNALAVVAIADEMGVPADVTREALASFGGVQRRFTVRGEAGGVTVVDDYGHHPAEVKATLLGAREAFHRRVVCLFQPHRYTRTRDLLPEFATAFNDADVLLLTDIYAAGEEPIPGATSEALAEAIRACGHRDVSLVPRPELARAARQRVRPGDIVLTLGAGDITAAGPELLGLLEA</sequence>
<reference key="1">
    <citation type="journal article" date="2015" name="Genome Announc.">
        <title>Complete genome sequence of Anaeromyxobacter sp. Fw109-5, an anaerobic, metal-reducing bacterium isolated from a contaminated subsurface environment.</title>
        <authorList>
            <person name="Hwang C."/>
            <person name="Copeland A."/>
            <person name="Lucas S."/>
            <person name="Lapidus A."/>
            <person name="Barry K."/>
            <person name="Glavina Del Rio T."/>
            <person name="Dalin E."/>
            <person name="Tice H."/>
            <person name="Pitluck S."/>
            <person name="Sims D."/>
            <person name="Brettin T."/>
            <person name="Bruce D.C."/>
            <person name="Detter J.C."/>
            <person name="Han C.S."/>
            <person name="Schmutz J."/>
            <person name="Larimer F.W."/>
            <person name="Land M.L."/>
            <person name="Hauser L.J."/>
            <person name="Kyrpides N."/>
            <person name="Lykidis A."/>
            <person name="Richardson P."/>
            <person name="Belieav A."/>
            <person name="Sanford R.A."/>
            <person name="Loeffler F.E."/>
            <person name="Fields M.W."/>
        </authorList>
    </citation>
    <scope>NUCLEOTIDE SEQUENCE [LARGE SCALE GENOMIC DNA]</scope>
    <source>
        <strain>Fw109-5</strain>
    </source>
</reference>
<organism>
    <name type="scientific">Anaeromyxobacter sp. (strain Fw109-5)</name>
    <dbReference type="NCBI Taxonomy" id="404589"/>
    <lineage>
        <taxon>Bacteria</taxon>
        <taxon>Pseudomonadati</taxon>
        <taxon>Myxococcota</taxon>
        <taxon>Myxococcia</taxon>
        <taxon>Myxococcales</taxon>
        <taxon>Cystobacterineae</taxon>
        <taxon>Anaeromyxobacteraceae</taxon>
        <taxon>Anaeromyxobacter</taxon>
    </lineage>
</organism>
<proteinExistence type="inferred from homology"/>
<keyword id="KW-0067">ATP-binding</keyword>
<keyword id="KW-0131">Cell cycle</keyword>
<keyword id="KW-0132">Cell division</keyword>
<keyword id="KW-0133">Cell shape</keyword>
<keyword id="KW-0961">Cell wall biogenesis/degradation</keyword>
<keyword id="KW-0963">Cytoplasm</keyword>
<keyword id="KW-0436">Ligase</keyword>
<keyword id="KW-0547">Nucleotide-binding</keyword>
<keyword id="KW-0573">Peptidoglycan synthesis</keyword>
<keyword id="KW-1185">Reference proteome</keyword>
<name>MURC_ANADF</name>
<protein>
    <recommendedName>
        <fullName evidence="1">UDP-N-acetylmuramate--L-alanine ligase</fullName>
        <ecNumber evidence="1">6.3.2.8</ecNumber>
    </recommendedName>
    <alternativeName>
        <fullName evidence="1">UDP-N-acetylmuramoyl-L-alanine synthetase</fullName>
    </alternativeName>
</protein>
<gene>
    <name evidence="1" type="primary">murC</name>
    <name type="ordered locus">Anae109_3885</name>
</gene>
<comment type="function">
    <text evidence="1">Cell wall formation.</text>
</comment>
<comment type="catalytic activity">
    <reaction evidence="1">
        <text>UDP-N-acetyl-alpha-D-muramate + L-alanine + ATP = UDP-N-acetyl-alpha-D-muramoyl-L-alanine + ADP + phosphate + H(+)</text>
        <dbReference type="Rhea" id="RHEA:23372"/>
        <dbReference type="ChEBI" id="CHEBI:15378"/>
        <dbReference type="ChEBI" id="CHEBI:30616"/>
        <dbReference type="ChEBI" id="CHEBI:43474"/>
        <dbReference type="ChEBI" id="CHEBI:57972"/>
        <dbReference type="ChEBI" id="CHEBI:70757"/>
        <dbReference type="ChEBI" id="CHEBI:83898"/>
        <dbReference type="ChEBI" id="CHEBI:456216"/>
        <dbReference type="EC" id="6.3.2.8"/>
    </reaction>
</comment>
<comment type="pathway">
    <text evidence="1">Cell wall biogenesis; peptidoglycan biosynthesis.</text>
</comment>
<comment type="subcellular location">
    <subcellularLocation>
        <location evidence="1">Cytoplasm</location>
    </subcellularLocation>
</comment>
<comment type="similarity">
    <text evidence="1">Belongs to the MurCDEF family.</text>
</comment>
<dbReference type="EC" id="6.3.2.8" evidence="1"/>
<dbReference type="EMBL" id="CP000769">
    <property type="protein sequence ID" value="ABS28064.1"/>
    <property type="molecule type" value="Genomic_DNA"/>
</dbReference>
<dbReference type="RefSeq" id="WP_012098698.1">
    <property type="nucleotide sequence ID" value="NC_009675.1"/>
</dbReference>
<dbReference type="SMR" id="A7HH68"/>
<dbReference type="STRING" id="404589.Anae109_3885"/>
<dbReference type="KEGG" id="afw:Anae109_3885"/>
<dbReference type="eggNOG" id="COG0773">
    <property type="taxonomic scope" value="Bacteria"/>
</dbReference>
<dbReference type="HOGENOM" id="CLU_028104_2_2_7"/>
<dbReference type="OrthoDB" id="9804126at2"/>
<dbReference type="UniPathway" id="UPA00219"/>
<dbReference type="Proteomes" id="UP000006382">
    <property type="component" value="Chromosome"/>
</dbReference>
<dbReference type="GO" id="GO:0005737">
    <property type="term" value="C:cytoplasm"/>
    <property type="evidence" value="ECO:0007669"/>
    <property type="project" value="UniProtKB-SubCell"/>
</dbReference>
<dbReference type="GO" id="GO:0005524">
    <property type="term" value="F:ATP binding"/>
    <property type="evidence" value="ECO:0007669"/>
    <property type="project" value="UniProtKB-UniRule"/>
</dbReference>
<dbReference type="GO" id="GO:0008763">
    <property type="term" value="F:UDP-N-acetylmuramate-L-alanine ligase activity"/>
    <property type="evidence" value="ECO:0007669"/>
    <property type="project" value="UniProtKB-UniRule"/>
</dbReference>
<dbReference type="GO" id="GO:0051301">
    <property type="term" value="P:cell division"/>
    <property type="evidence" value="ECO:0007669"/>
    <property type="project" value="UniProtKB-KW"/>
</dbReference>
<dbReference type="GO" id="GO:0071555">
    <property type="term" value="P:cell wall organization"/>
    <property type="evidence" value="ECO:0007669"/>
    <property type="project" value="UniProtKB-KW"/>
</dbReference>
<dbReference type="GO" id="GO:0009252">
    <property type="term" value="P:peptidoglycan biosynthetic process"/>
    <property type="evidence" value="ECO:0007669"/>
    <property type="project" value="UniProtKB-UniRule"/>
</dbReference>
<dbReference type="GO" id="GO:0008360">
    <property type="term" value="P:regulation of cell shape"/>
    <property type="evidence" value="ECO:0007669"/>
    <property type="project" value="UniProtKB-KW"/>
</dbReference>
<dbReference type="Gene3D" id="3.90.190.20">
    <property type="entry name" value="Mur ligase, C-terminal domain"/>
    <property type="match status" value="1"/>
</dbReference>
<dbReference type="Gene3D" id="3.40.1190.10">
    <property type="entry name" value="Mur-like, catalytic domain"/>
    <property type="match status" value="1"/>
</dbReference>
<dbReference type="Gene3D" id="3.40.50.720">
    <property type="entry name" value="NAD(P)-binding Rossmann-like Domain"/>
    <property type="match status" value="1"/>
</dbReference>
<dbReference type="HAMAP" id="MF_00046">
    <property type="entry name" value="MurC"/>
    <property type="match status" value="1"/>
</dbReference>
<dbReference type="InterPro" id="IPR036565">
    <property type="entry name" value="Mur-like_cat_sf"/>
</dbReference>
<dbReference type="InterPro" id="IPR004101">
    <property type="entry name" value="Mur_ligase_C"/>
</dbReference>
<dbReference type="InterPro" id="IPR036615">
    <property type="entry name" value="Mur_ligase_C_dom_sf"/>
</dbReference>
<dbReference type="InterPro" id="IPR013221">
    <property type="entry name" value="Mur_ligase_cen"/>
</dbReference>
<dbReference type="InterPro" id="IPR000713">
    <property type="entry name" value="Mur_ligase_N"/>
</dbReference>
<dbReference type="InterPro" id="IPR050061">
    <property type="entry name" value="MurCDEF_pg_biosynth"/>
</dbReference>
<dbReference type="InterPro" id="IPR005758">
    <property type="entry name" value="UDP-N-AcMur_Ala_ligase_MurC"/>
</dbReference>
<dbReference type="NCBIfam" id="TIGR01082">
    <property type="entry name" value="murC"/>
    <property type="match status" value="1"/>
</dbReference>
<dbReference type="PANTHER" id="PTHR43445:SF3">
    <property type="entry name" value="UDP-N-ACETYLMURAMATE--L-ALANINE LIGASE"/>
    <property type="match status" value="1"/>
</dbReference>
<dbReference type="PANTHER" id="PTHR43445">
    <property type="entry name" value="UDP-N-ACETYLMURAMATE--L-ALANINE LIGASE-RELATED"/>
    <property type="match status" value="1"/>
</dbReference>
<dbReference type="Pfam" id="PF01225">
    <property type="entry name" value="Mur_ligase"/>
    <property type="match status" value="1"/>
</dbReference>
<dbReference type="Pfam" id="PF02875">
    <property type="entry name" value="Mur_ligase_C"/>
    <property type="match status" value="1"/>
</dbReference>
<dbReference type="Pfam" id="PF08245">
    <property type="entry name" value="Mur_ligase_M"/>
    <property type="match status" value="1"/>
</dbReference>
<dbReference type="SUPFAM" id="SSF51984">
    <property type="entry name" value="MurCD N-terminal domain"/>
    <property type="match status" value="1"/>
</dbReference>
<dbReference type="SUPFAM" id="SSF53623">
    <property type="entry name" value="MurD-like peptide ligases, catalytic domain"/>
    <property type="match status" value="1"/>
</dbReference>
<dbReference type="SUPFAM" id="SSF53244">
    <property type="entry name" value="MurD-like peptide ligases, peptide-binding domain"/>
    <property type="match status" value="1"/>
</dbReference>